<feature type="chain" id="PRO_0000295392" description="Polyadenylate-binding protein, cytoplasmic and nuclear">
    <location>
        <begin position="1"/>
        <end position="592"/>
    </location>
</feature>
<feature type="domain" description="RRM 1" evidence="2">
    <location>
        <begin position="50"/>
        <end position="128"/>
    </location>
</feature>
<feature type="domain" description="RRM 2" evidence="2">
    <location>
        <begin position="138"/>
        <end position="215"/>
    </location>
</feature>
<feature type="domain" description="RRM 3" evidence="2">
    <location>
        <begin position="231"/>
        <end position="308"/>
    </location>
</feature>
<feature type="domain" description="RRM 4" evidence="2">
    <location>
        <begin position="334"/>
        <end position="411"/>
    </location>
</feature>
<feature type="domain" description="PABC" evidence="3">
    <location>
        <begin position="507"/>
        <end position="586"/>
    </location>
</feature>
<feature type="region of interest" description="Disordered" evidence="4">
    <location>
        <begin position="1"/>
        <end position="43"/>
    </location>
</feature>
<feature type="compositionally biased region" description="Basic and acidic residues" evidence="4">
    <location>
        <begin position="1"/>
        <end position="10"/>
    </location>
</feature>
<feature type="compositionally biased region" description="Polar residues" evidence="4">
    <location>
        <begin position="11"/>
        <end position="20"/>
    </location>
</feature>
<feature type="compositionally biased region" description="Low complexity" evidence="4">
    <location>
        <begin position="21"/>
        <end position="43"/>
    </location>
</feature>
<name>PABP_KLULA</name>
<comment type="function">
    <text evidence="1">Binds the poly(A) tail of mRNA. Appears to be an important mediator of the multiple roles of the poly(A) tail in mRNA biogenesis, stability and translation. In the nucleus, involved in both mRNA cleavage and polyadenylation. Is also required for efficient mRNA export to the cytoplasm. Acts in concert with a poly(A)-specific nuclease (PAN) to affect poly(A) tail shortening, which may occur concomitantly with either nucleocytoplasmic mRNA transport or translational initiation. In the cytoplasm, stimulates translation initiation and regulates mRNA decay through translation termination-coupled poly(A) shortening, probably mediated by PAN (By similarity).</text>
</comment>
<comment type="subcellular location">
    <subcellularLocation>
        <location evidence="1">Cytoplasm</location>
    </subcellularLocation>
    <subcellularLocation>
        <location evidence="1">Nucleus</location>
    </subcellularLocation>
</comment>
<comment type="similarity">
    <text evidence="5">Belongs to the polyadenylate-binding protein type-1 family.</text>
</comment>
<accession>Q6CSV3</accession>
<gene>
    <name type="primary">PAB1</name>
    <name type="ordered locus">KLLA0C17600g</name>
</gene>
<keyword id="KW-0963">Cytoplasm</keyword>
<keyword id="KW-0507">mRNA processing</keyword>
<keyword id="KW-0509">mRNA transport</keyword>
<keyword id="KW-0539">Nucleus</keyword>
<keyword id="KW-1185">Reference proteome</keyword>
<keyword id="KW-0677">Repeat</keyword>
<keyword id="KW-0694">RNA-binding</keyword>
<keyword id="KW-0810">Translation regulation</keyword>
<keyword id="KW-0813">Transport</keyword>
<reference key="1">
    <citation type="journal article" date="2004" name="Nature">
        <title>Genome evolution in yeasts.</title>
        <authorList>
            <person name="Dujon B."/>
            <person name="Sherman D."/>
            <person name="Fischer G."/>
            <person name="Durrens P."/>
            <person name="Casaregola S."/>
            <person name="Lafontaine I."/>
            <person name="de Montigny J."/>
            <person name="Marck C."/>
            <person name="Neuveglise C."/>
            <person name="Talla E."/>
            <person name="Goffard N."/>
            <person name="Frangeul L."/>
            <person name="Aigle M."/>
            <person name="Anthouard V."/>
            <person name="Babour A."/>
            <person name="Barbe V."/>
            <person name="Barnay S."/>
            <person name="Blanchin S."/>
            <person name="Beckerich J.-M."/>
            <person name="Beyne E."/>
            <person name="Bleykasten C."/>
            <person name="Boisrame A."/>
            <person name="Boyer J."/>
            <person name="Cattolico L."/>
            <person name="Confanioleri F."/>
            <person name="de Daruvar A."/>
            <person name="Despons L."/>
            <person name="Fabre E."/>
            <person name="Fairhead C."/>
            <person name="Ferry-Dumazet H."/>
            <person name="Groppi A."/>
            <person name="Hantraye F."/>
            <person name="Hennequin C."/>
            <person name="Jauniaux N."/>
            <person name="Joyet P."/>
            <person name="Kachouri R."/>
            <person name="Kerrest A."/>
            <person name="Koszul R."/>
            <person name="Lemaire M."/>
            <person name="Lesur I."/>
            <person name="Ma L."/>
            <person name="Muller H."/>
            <person name="Nicaud J.-M."/>
            <person name="Nikolski M."/>
            <person name="Oztas S."/>
            <person name="Ozier-Kalogeropoulos O."/>
            <person name="Pellenz S."/>
            <person name="Potier S."/>
            <person name="Richard G.-F."/>
            <person name="Straub M.-L."/>
            <person name="Suleau A."/>
            <person name="Swennen D."/>
            <person name="Tekaia F."/>
            <person name="Wesolowski-Louvel M."/>
            <person name="Westhof E."/>
            <person name="Wirth B."/>
            <person name="Zeniou-Meyer M."/>
            <person name="Zivanovic Y."/>
            <person name="Bolotin-Fukuhara M."/>
            <person name="Thierry A."/>
            <person name="Bouchier C."/>
            <person name="Caudron B."/>
            <person name="Scarpelli C."/>
            <person name="Gaillardin C."/>
            <person name="Weissenbach J."/>
            <person name="Wincker P."/>
            <person name="Souciet J.-L."/>
        </authorList>
    </citation>
    <scope>NUCLEOTIDE SEQUENCE [LARGE SCALE GENOMIC DNA]</scope>
    <source>
        <strain>ATCC 8585 / CBS 2359 / DSM 70799 / NBRC 1267 / NRRL Y-1140 / WM37</strain>
    </source>
</reference>
<organism>
    <name type="scientific">Kluyveromyces lactis (strain ATCC 8585 / CBS 2359 / DSM 70799 / NBRC 1267 / NRRL Y-1140 / WM37)</name>
    <name type="common">Yeast</name>
    <name type="synonym">Candida sphaerica</name>
    <dbReference type="NCBI Taxonomy" id="284590"/>
    <lineage>
        <taxon>Eukaryota</taxon>
        <taxon>Fungi</taxon>
        <taxon>Dikarya</taxon>
        <taxon>Ascomycota</taxon>
        <taxon>Saccharomycotina</taxon>
        <taxon>Saccharomycetes</taxon>
        <taxon>Saccharomycetales</taxon>
        <taxon>Saccharomycetaceae</taxon>
        <taxon>Kluyveromyces</taxon>
    </lineage>
</organism>
<evidence type="ECO:0000250" key="1"/>
<evidence type="ECO:0000255" key="2">
    <source>
        <dbReference type="PROSITE-ProRule" id="PRU00176"/>
    </source>
</evidence>
<evidence type="ECO:0000255" key="3">
    <source>
        <dbReference type="PROSITE-ProRule" id="PRU00641"/>
    </source>
</evidence>
<evidence type="ECO:0000256" key="4">
    <source>
        <dbReference type="SAM" id="MobiDB-lite"/>
    </source>
</evidence>
<evidence type="ECO:0000305" key="5"/>
<protein>
    <recommendedName>
        <fullName>Polyadenylate-binding protein, cytoplasmic and nuclear</fullName>
        <shortName>PABP</shortName>
        <shortName>Poly(A)-binding protein</shortName>
    </recommendedName>
    <alternativeName>
        <fullName>Polyadenylate tail-binding protein</fullName>
    </alternativeName>
</protein>
<sequence>MSDITEKTAEQLENLQINDDQQPAQSASAPSTSASESEASSVSKVENNNASLYVGELDPNITEALLYDVFSPLGPISSIRVCRDAVTKASLGYAYVNYTDYEAGKKAIQELNYAEINGRPCRIMWSERDPAIRKKGSGNIFIKNLHPAIDNKALHETFSTFGEVLSCKVALDENGNSRGFGFVHFKEESDAKDAIEAVNGMLMNGLEVYVAMHVPKKDRISKLEEAKANFTNIYVKNIDVETTDEEFEQLFSQYGEIVSAALEKDAEGKPKGFGFVNFVDHNAAAKAVEELNGKEFKSQALYVGRAQKKYERAEELKKQYEQYRLEKLAKFQGVNLFIKNLDDSIDDEKLKEEFAPYGTITSARVMRDQEGNSKGFGFVCFSSPEEATKAMTEKNQQIVAGKPLYVAIAQRKDVRRSQLAQQIQARNQIRFQQQQQQQAAAAAAGMPGQYMPQMFYGVMAPRGFPGPNPGMNGPMGAGIPKNGMVPPPQQFAGRPNGPMYQGMPPQNQFPRHQQQHYIQQQKQRQALGEQLYKKVSAKIDDENAAGKITGMILDLPPQQVIQLLDNDEQFEQQFQEALAAYENFKKEQEAQA</sequence>
<dbReference type="EMBL" id="CR382123">
    <property type="protein sequence ID" value="CAH01837.1"/>
    <property type="molecule type" value="Genomic_DNA"/>
</dbReference>
<dbReference type="RefSeq" id="XP_452986.1">
    <property type="nucleotide sequence ID" value="XM_452986.1"/>
</dbReference>
<dbReference type="SMR" id="Q6CSV3"/>
<dbReference type="FunCoup" id="Q6CSV3">
    <property type="interactions" value="1523"/>
</dbReference>
<dbReference type="STRING" id="284590.Q6CSV3"/>
<dbReference type="PaxDb" id="284590-Q6CSV3"/>
<dbReference type="KEGG" id="kla:KLLA0_C17600g"/>
<dbReference type="eggNOG" id="KOG0123">
    <property type="taxonomic scope" value="Eukaryota"/>
</dbReference>
<dbReference type="HOGENOM" id="CLU_012062_22_4_1"/>
<dbReference type="InParanoid" id="Q6CSV3"/>
<dbReference type="OMA" id="NATYSMA"/>
<dbReference type="Proteomes" id="UP000000598">
    <property type="component" value="Chromosome C"/>
</dbReference>
<dbReference type="GO" id="GO:0005737">
    <property type="term" value="C:cytoplasm"/>
    <property type="evidence" value="ECO:0007669"/>
    <property type="project" value="UniProtKB-SubCell"/>
</dbReference>
<dbReference type="GO" id="GO:0005634">
    <property type="term" value="C:nucleus"/>
    <property type="evidence" value="ECO:0007669"/>
    <property type="project" value="UniProtKB-SubCell"/>
</dbReference>
<dbReference type="GO" id="GO:0003723">
    <property type="term" value="F:RNA binding"/>
    <property type="evidence" value="ECO:0007669"/>
    <property type="project" value="UniProtKB-KW"/>
</dbReference>
<dbReference type="GO" id="GO:0006397">
    <property type="term" value="P:mRNA processing"/>
    <property type="evidence" value="ECO:0007669"/>
    <property type="project" value="UniProtKB-KW"/>
</dbReference>
<dbReference type="GO" id="GO:0051028">
    <property type="term" value="P:mRNA transport"/>
    <property type="evidence" value="ECO:0007669"/>
    <property type="project" value="UniProtKB-KW"/>
</dbReference>
<dbReference type="GO" id="GO:0006417">
    <property type="term" value="P:regulation of translation"/>
    <property type="evidence" value="ECO:0007669"/>
    <property type="project" value="UniProtKB-KW"/>
</dbReference>
<dbReference type="CDD" id="cd12378">
    <property type="entry name" value="RRM1_I_PABPs"/>
    <property type="match status" value="1"/>
</dbReference>
<dbReference type="CDD" id="cd12379">
    <property type="entry name" value="RRM2_I_PABPs"/>
    <property type="match status" value="1"/>
</dbReference>
<dbReference type="CDD" id="cd12380">
    <property type="entry name" value="RRM3_I_PABPs"/>
    <property type="match status" value="1"/>
</dbReference>
<dbReference type="CDD" id="cd12381">
    <property type="entry name" value="RRM4_I_PABPs"/>
    <property type="match status" value="1"/>
</dbReference>
<dbReference type="FunFam" id="3.30.70.330:FF:000003">
    <property type="entry name" value="Polyadenylate-binding protein"/>
    <property type="match status" value="1"/>
</dbReference>
<dbReference type="FunFam" id="3.30.70.330:FF:000211">
    <property type="entry name" value="Polyadenylate-binding protein"/>
    <property type="match status" value="1"/>
</dbReference>
<dbReference type="FunFam" id="3.30.70.330:FF:000520">
    <property type="entry name" value="Polyadenylate-binding protein"/>
    <property type="match status" value="1"/>
</dbReference>
<dbReference type="FunFam" id="3.30.70.330:FF:000648">
    <property type="entry name" value="Polyadenylate-binding protein"/>
    <property type="match status" value="1"/>
</dbReference>
<dbReference type="Gene3D" id="3.30.70.330">
    <property type="match status" value="4"/>
</dbReference>
<dbReference type="Gene3D" id="1.10.1900.10">
    <property type="entry name" value="c-terminal domain of poly(a) binding protein"/>
    <property type="match status" value="1"/>
</dbReference>
<dbReference type="InterPro" id="IPR012677">
    <property type="entry name" value="Nucleotide-bd_a/b_plait_sf"/>
</dbReference>
<dbReference type="InterPro" id="IPR036053">
    <property type="entry name" value="PABP-dom"/>
</dbReference>
<dbReference type="InterPro" id="IPR006515">
    <property type="entry name" value="PABP_1234"/>
</dbReference>
<dbReference type="InterPro" id="IPR002004">
    <property type="entry name" value="PABP_HYD_C"/>
</dbReference>
<dbReference type="InterPro" id="IPR034364">
    <property type="entry name" value="PABP_RRM1"/>
</dbReference>
<dbReference type="InterPro" id="IPR035979">
    <property type="entry name" value="RBD_domain_sf"/>
</dbReference>
<dbReference type="InterPro" id="IPR045305">
    <property type="entry name" value="RRM2_I_PABPs"/>
</dbReference>
<dbReference type="InterPro" id="IPR000504">
    <property type="entry name" value="RRM_dom"/>
</dbReference>
<dbReference type="InterPro" id="IPR003954">
    <property type="entry name" value="RRM_dom_euk"/>
</dbReference>
<dbReference type="NCBIfam" id="TIGR01628">
    <property type="entry name" value="PABP-1234"/>
    <property type="match status" value="1"/>
</dbReference>
<dbReference type="PANTHER" id="PTHR24012">
    <property type="entry name" value="RNA BINDING PROTEIN"/>
    <property type="match status" value="1"/>
</dbReference>
<dbReference type="Pfam" id="PF00658">
    <property type="entry name" value="MLLE"/>
    <property type="match status" value="1"/>
</dbReference>
<dbReference type="Pfam" id="PF00076">
    <property type="entry name" value="RRM_1"/>
    <property type="match status" value="4"/>
</dbReference>
<dbReference type="SMART" id="SM00517">
    <property type="entry name" value="PolyA"/>
    <property type="match status" value="1"/>
</dbReference>
<dbReference type="SMART" id="SM00360">
    <property type="entry name" value="RRM"/>
    <property type="match status" value="4"/>
</dbReference>
<dbReference type="SMART" id="SM00361">
    <property type="entry name" value="RRM_1"/>
    <property type="match status" value="3"/>
</dbReference>
<dbReference type="SUPFAM" id="SSF63570">
    <property type="entry name" value="PABC (PABP) domain"/>
    <property type="match status" value="1"/>
</dbReference>
<dbReference type="SUPFAM" id="SSF54928">
    <property type="entry name" value="RNA-binding domain, RBD"/>
    <property type="match status" value="2"/>
</dbReference>
<dbReference type="PROSITE" id="PS51309">
    <property type="entry name" value="PABC"/>
    <property type="match status" value="1"/>
</dbReference>
<dbReference type="PROSITE" id="PS50102">
    <property type="entry name" value="RRM"/>
    <property type="match status" value="4"/>
</dbReference>
<proteinExistence type="inferred from homology"/>